<dbReference type="EMBL" id="CP000688">
    <property type="protein sequence ID" value="ABQ17120.1"/>
    <property type="molecule type" value="Genomic_DNA"/>
</dbReference>
<dbReference type="SMR" id="A5FRQ2"/>
<dbReference type="KEGG" id="deb:DehaBAV1_0535"/>
<dbReference type="PATRIC" id="fig|216389.18.peg.580"/>
<dbReference type="HOGENOM" id="CLU_085114_4_2_0"/>
<dbReference type="GO" id="GO:0005886">
    <property type="term" value="C:plasma membrane"/>
    <property type="evidence" value="ECO:0007669"/>
    <property type="project" value="UniProtKB-SubCell"/>
</dbReference>
<dbReference type="GO" id="GO:0045259">
    <property type="term" value="C:proton-transporting ATP synthase complex"/>
    <property type="evidence" value="ECO:0007669"/>
    <property type="project" value="UniProtKB-KW"/>
</dbReference>
<dbReference type="GO" id="GO:0046933">
    <property type="term" value="F:proton-transporting ATP synthase activity, rotational mechanism"/>
    <property type="evidence" value="ECO:0007669"/>
    <property type="project" value="UniProtKB-UniRule"/>
</dbReference>
<dbReference type="Gene3D" id="1.10.520.20">
    <property type="entry name" value="N-terminal domain of the delta subunit of the F1F0-ATP synthase"/>
    <property type="match status" value="1"/>
</dbReference>
<dbReference type="HAMAP" id="MF_01416">
    <property type="entry name" value="ATP_synth_delta_bact"/>
    <property type="match status" value="1"/>
</dbReference>
<dbReference type="InterPro" id="IPR026015">
    <property type="entry name" value="ATP_synth_OSCP/delta_N_sf"/>
</dbReference>
<dbReference type="InterPro" id="IPR000711">
    <property type="entry name" value="ATPase_OSCP/dsu"/>
</dbReference>
<dbReference type="NCBIfam" id="TIGR01145">
    <property type="entry name" value="ATP_synt_delta"/>
    <property type="match status" value="1"/>
</dbReference>
<dbReference type="PANTHER" id="PTHR11910">
    <property type="entry name" value="ATP SYNTHASE DELTA CHAIN"/>
    <property type="match status" value="1"/>
</dbReference>
<dbReference type="Pfam" id="PF00213">
    <property type="entry name" value="OSCP"/>
    <property type="match status" value="1"/>
</dbReference>
<dbReference type="PRINTS" id="PR00125">
    <property type="entry name" value="ATPASEDELTA"/>
</dbReference>
<dbReference type="SUPFAM" id="SSF47928">
    <property type="entry name" value="N-terminal domain of the delta subunit of the F1F0-ATP synthase"/>
    <property type="match status" value="1"/>
</dbReference>
<proteinExistence type="inferred from homology"/>
<accession>A5FRQ2</accession>
<gene>
    <name evidence="1" type="primary">atpH</name>
    <name type="ordered locus">DehaBAV1_0535</name>
</gene>
<feature type="chain" id="PRO_0000370960" description="ATP synthase subunit delta">
    <location>
        <begin position="1"/>
        <end position="180"/>
    </location>
</feature>
<protein>
    <recommendedName>
        <fullName evidence="1">ATP synthase subunit delta</fullName>
    </recommendedName>
    <alternativeName>
        <fullName evidence="1">ATP synthase F(1) sector subunit delta</fullName>
    </alternativeName>
    <alternativeName>
        <fullName evidence="1">F-type ATPase subunit delta</fullName>
        <shortName evidence="1">F-ATPase subunit delta</shortName>
    </alternativeName>
</protein>
<comment type="function">
    <text evidence="1">F(1)F(0) ATP synthase produces ATP from ADP in the presence of a proton or sodium gradient. F-type ATPases consist of two structural domains, F(1) containing the extramembraneous catalytic core and F(0) containing the membrane proton channel, linked together by a central stalk and a peripheral stalk. During catalysis, ATP synthesis in the catalytic domain of F(1) is coupled via a rotary mechanism of the central stalk subunits to proton translocation.</text>
</comment>
<comment type="function">
    <text evidence="1">This protein is part of the stalk that links CF(0) to CF(1). It either transmits conformational changes from CF(0) to CF(1) or is implicated in proton conduction.</text>
</comment>
<comment type="subunit">
    <text evidence="1">F-type ATPases have 2 components, F(1) - the catalytic core - and F(0) - the membrane proton channel. F(1) has five subunits: alpha(3), beta(3), gamma(1), delta(1), epsilon(1). F(0) has three main subunits: a(1), b(2) and c(10-14). The alpha and beta chains form an alternating ring which encloses part of the gamma chain. F(1) is attached to F(0) by a central stalk formed by the gamma and epsilon chains, while a peripheral stalk is formed by the delta and b chains.</text>
</comment>
<comment type="subcellular location">
    <subcellularLocation>
        <location evidence="1">Cell membrane</location>
        <topology evidence="1">Peripheral membrane protein</topology>
    </subcellularLocation>
</comment>
<comment type="similarity">
    <text evidence="1">Belongs to the ATPase delta chain family.</text>
</comment>
<name>ATPD_DEHMB</name>
<organism>
    <name type="scientific">Dehalococcoides mccartyi (strain ATCC BAA-2100 / JCM 16839 / KCTC 5957 / BAV1)</name>
    <dbReference type="NCBI Taxonomy" id="216389"/>
    <lineage>
        <taxon>Bacteria</taxon>
        <taxon>Bacillati</taxon>
        <taxon>Chloroflexota</taxon>
        <taxon>Dehalococcoidia</taxon>
        <taxon>Dehalococcoidales</taxon>
        <taxon>Dehalococcoidaceae</taxon>
        <taxon>Dehalococcoides</taxon>
    </lineage>
</organism>
<sequence>MAKRVYAIAMRYAQALHELAKEQKSLDKWQEDLQNLSRLTEDASVDEFLSNPKIVSARKHAVLAKLSDIDPLMLNLVDMLVATRRLGIMRAISGEYNRLLNEARGVEDAIVTTAKPASEADTEIIRQQLSKITGKKINILTATDPGLIAGLKARIGDKLIDGSISRRLVLLQNEISQGRI</sequence>
<reference key="1">
    <citation type="submission" date="2007-05" db="EMBL/GenBank/DDBJ databases">
        <title>Complete sequence of Dehalococcoides sp. BAV1.</title>
        <authorList>
            <consortium name="US DOE Joint Genome Institute"/>
            <person name="Copeland A."/>
            <person name="Lucas S."/>
            <person name="Lapidus A."/>
            <person name="Barry K."/>
            <person name="Detter J.C."/>
            <person name="Glavina del Rio T."/>
            <person name="Hammon N."/>
            <person name="Israni S."/>
            <person name="Pitluck S."/>
            <person name="Lowry S."/>
            <person name="Clum A."/>
            <person name="Schmutz J."/>
            <person name="Larimer F."/>
            <person name="Land M."/>
            <person name="Hauser L."/>
            <person name="Kyrpides N."/>
            <person name="Kim E."/>
            <person name="Ritalahti K.M."/>
            <person name="Loeffler F."/>
            <person name="Richardson P."/>
        </authorList>
    </citation>
    <scope>NUCLEOTIDE SEQUENCE [LARGE SCALE GENOMIC DNA]</scope>
    <source>
        <strain>ATCC BAA-2100 / JCM 16839 / KCTC 5957 / BAV1</strain>
    </source>
</reference>
<evidence type="ECO:0000255" key="1">
    <source>
        <dbReference type="HAMAP-Rule" id="MF_01416"/>
    </source>
</evidence>
<keyword id="KW-0066">ATP synthesis</keyword>
<keyword id="KW-1003">Cell membrane</keyword>
<keyword id="KW-0139">CF(1)</keyword>
<keyword id="KW-0375">Hydrogen ion transport</keyword>
<keyword id="KW-0406">Ion transport</keyword>
<keyword id="KW-0472">Membrane</keyword>
<keyword id="KW-0813">Transport</keyword>